<organism>
    <name type="scientific">Acidovorax sp. (strain JS42)</name>
    <dbReference type="NCBI Taxonomy" id="232721"/>
    <lineage>
        <taxon>Bacteria</taxon>
        <taxon>Pseudomonadati</taxon>
        <taxon>Pseudomonadota</taxon>
        <taxon>Betaproteobacteria</taxon>
        <taxon>Burkholderiales</taxon>
        <taxon>Comamonadaceae</taxon>
        <taxon>Acidovorax</taxon>
    </lineage>
</organism>
<gene>
    <name evidence="1" type="primary">hemA</name>
    <name type="ordered locus">Ajs_0852</name>
</gene>
<accession>A1W4B9</accession>
<reference key="1">
    <citation type="submission" date="2006-12" db="EMBL/GenBank/DDBJ databases">
        <title>Complete sequence of chromosome 1 of Acidovorax sp. JS42.</title>
        <authorList>
            <person name="Copeland A."/>
            <person name="Lucas S."/>
            <person name="Lapidus A."/>
            <person name="Barry K."/>
            <person name="Detter J.C."/>
            <person name="Glavina del Rio T."/>
            <person name="Dalin E."/>
            <person name="Tice H."/>
            <person name="Pitluck S."/>
            <person name="Chertkov O."/>
            <person name="Brettin T."/>
            <person name="Bruce D."/>
            <person name="Han C."/>
            <person name="Tapia R."/>
            <person name="Gilna P."/>
            <person name="Schmutz J."/>
            <person name="Larimer F."/>
            <person name="Land M."/>
            <person name="Hauser L."/>
            <person name="Kyrpides N."/>
            <person name="Kim E."/>
            <person name="Stahl D."/>
            <person name="Richardson P."/>
        </authorList>
    </citation>
    <scope>NUCLEOTIDE SEQUENCE [LARGE SCALE GENOMIC DNA]</scope>
    <source>
        <strain>JS42</strain>
    </source>
</reference>
<sequence length="436" mass="47070">MAVWALGINHHTAPLDLRGRFAFALDQIAPTLHGLRDSLSSASGRHPGVETAIISTCNRTEIYCAAEAPALDHTLDWLAHSGGVSPALLRSHSYSLENGLVARHAFRVASGLDSMVLGEAQILGQMKDAVRAAEGAGALGTTLNQLFQRSFAVAKEVRTSTDIGAHSISMAAAAVRLAGQLFEDLSQIRVLFVGAGEMIELCTTHFAAKNPKQISIANRTLERGEKLAARFGGDVMRLADLPDHLHEYDAVISCTASSLPIIGLGAVERSLKKRRHRPMFMVDLAVPRDIEPEVQQLQDAYLYTVDDLASVVQTAQAHRQAAVAQAEAIIDAGVQSFVHWMELRSPATQNGGVVPLIQQLNSQADEWRALEIARAKKRLAKGEDIETVLEALSRGLTQKMLHGTMAELRAGDAEARAQTAQAVSRLFLRSHSKNGL</sequence>
<name>HEM1_ACISJ</name>
<feature type="chain" id="PRO_0000335002" description="Glutamyl-tRNA reductase">
    <location>
        <begin position="1"/>
        <end position="436"/>
    </location>
</feature>
<feature type="active site" description="Nucleophile" evidence="1">
    <location>
        <position position="57"/>
    </location>
</feature>
<feature type="binding site" evidence="1">
    <location>
        <begin position="56"/>
        <end position="59"/>
    </location>
    <ligand>
        <name>substrate</name>
    </ligand>
</feature>
<feature type="binding site" evidence="1">
    <location>
        <position position="114"/>
    </location>
    <ligand>
        <name>substrate</name>
    </ligand>
</feature>
<feature type="binding site" evidence="1">
    <location>
        <begin position="119"/>
        <end position="121"/>
    </location>
    <ligand>
        <name>substrate</name>
    </ligand>
</feature>
<feature type="binding site" evidence="1">
    <location>
        <position position="125"/>
    </location>
    <ligand>
        <name>substrate</name>
    </ligand>
</feature>
<feature type="binding site" evidence="1">
    <location>
        <begin position="194"/>
        <end position="199"/>
    </location>
    <ligand>
        <name>NADP(+)</name>
        <dbReference type="ChEBI" id="CHEBI:58349"/>
    </ligand>
</feature>
<feature type="site" description="Important for activity" evidence="1">
    <location>
        <position position="104"/>
    </location>
</feature>
<protein>
    <recommendedName>
        <fullName evidence="1">Glutamyl-tRNA reductase</fullName>
        <shortName evidence="1">GluTR</shortName>
        <ecNumber evidence="1">1.2.1.70</ecNumber>
    </recommendedName>
</protein>
<proteinExistence type="inferred from homology"/>
<keyword id="KW-0521">NADP</keyword>
<keyword id="KW-0560">Oxidoreductase</keyword>
<keyword id="KW-0627">Porphyrin biosynthesis</keyword>
<evidence type="ECO:0000255" key="1">
    <source>
        <dbReference type="HAMAP-Rule" id="MF_00087"/>
    </source>
</evidence>
<dbReference type="EC" id="1.2.1.70" evidence="1"/>
<dbReference type="EMBL" id="CP000539">
    <property type="protein sequence ID" value="ABM41094.1"/>
    <property type="molecule type" value="Genomic_DNA"/>
</dbReference>
<dbReference type="SMR" id="A1W4B9"/>
<dbReference type="STRING" id="232721.Ajs_0852"/>
<dbReference type="KEGG" id="ajs:Ajs_0852"/>
<dbReference type="eggNOG" id="COG0373">
    <property type="taxonomic scope" value="Bacteria"/>
</dbReference>
<dbReference type="HOGENOM" id="CLU_035113_2_2_4"/>
<dbReference type="UniPathway" id="UPA00251">
    <property type="reaction ID" value="UER00316"/>
</dbReference>
<dbReference type="Proteomes" id="UP000000645">
    <property type="component" value="Chromosome"/>
</dbReference>
<dbReference type="GO" id="GO:0008883">
    <property type="term" value="F:glutamyl-tRNA reductase activity"/>
    <property type="evidence" value="ECO:0007669"/>
    <property type="project" value="UniProtKB-UniRule"/>
</dbReference>
<dbReference type="GO" id="GO:0050661">
    <property type="term" value="F:NADP binding"/>
    <property type="evidence" value="ECO:0007669"/>
    <property type="project" value="InterPro"/>
</dbReference>
<dbReference type="GO" id="GO:0019353">
    <property type="term" value="P:protoporphyrinogen IX biosynthetic process from glutamate"/>
    <property type="evidence" value="ECO:0007669"/>
    <property type="project" value="TreeGrafter"/>
</dbReference>
<dbReference type="CDD" id="cd05213">
    <property type="entry name" value="NAD_bind_Glutamyl_tRNA_reduct"/>
    <property type="match status" value="1"/>
</dbReference>
<dbReference type="FunFam" id="3.30.460.30:FF:000001">
    <property type="entry name" value="Glutamyl-tRNA reductase"/>
    <property type="match status" value="1"/>
</dbReference>
<dbReference type="FunFam" id="3.40.50.720:FF:000031">
    <property type="entry name" value="Glutamyl-tRNA reductase"/>
    <property type="match status" value="1"/>
</dbReference>
<dbReference type="Gene3D" id="3.30.460.30">
    <property type="entry name" value="Glutamyl-tRNA reductase, N-terminal domain"/>
    <property type="match status" value="1"/>
</dbReference>
<dbReference type="Gene3D" id="3.40.50.720">
    <property type="entry name" value="NAD(P)-binding Rossmann-like Domain"/>
    <property type="match status" value="1"/>
</dbReference>
<dbReference type="HAMAP" id="MF_00087">
    <property type="entry name" value="Glu_tRNA_reductase"/>
    <property type="match status" value="1"/>
</dbReference>
<dbReference type="InterPro" id="IPR000343">
    <property type="entry name" value="4pyrrol_synth_GluRdtase"/>
</dbReference>
<dbReference type="InterPro" id="IPR015896">
    <property type="entry name" value="4pyrrol_synth_GluRdtase_dimer"/>
</dbReference>
<dbReference type="InterPro" id="IPR015895">
    <property type="entry name" value="4pyrrol_synth_GluRdtase_N"/>
</dbReference>
<dbReference type="InterPro" id="IPR018214">
    <property type="entry name" value="GluRdtase_CS"/>
</dbReference>
<dbReference type="InterPro" id="IPR036453">
    <property type="entry name" value="GluRdtase_dimer_dom_sf"/>
</dbReference>
<dbReference type="InterPro" id="IPR036343">
    <property type="entry name" value="GluRdtase_N_sf"/>
</dbReference>
<dbReference type="InterPro" id="IPR036291">
    <property type="entry name" value="NAD(P)-bd_dom_sf"/>
</dbReference>
<dbReference type="InterPro" id="IPR006151">
    <property type="entry name" value="Shikm_DH/Glu-tRNA_Rdtase"/>
</dbReference>
<dbReference type="NCBIfam" id="TIGR01035">
    <property type="entry name" value="hemA"/>
    <property type="match status" value="1"/>
</dbReference>
<dbReference type="PANTHER" id="PTHR43013">
    <property type="entry name" value="GLUTAMYL-TRNA REDUCTASE"/>
    <property type="match status" value="1"/>
</dbReference>
<dbReference type="PANTHER" id="PTHR43013:SF1">
    <property type="entry name" value="GLUTAMYL-TRNA REDUCTASE"/>
    <property type="match status" value="1"/>
</dbReference>
<dbReference type="Pfam" id="PF00745">
    <property type="entry name" value="GlutR_dimer"/>
    <property type="match status" value="1"/>
</dbReference>
<dbReference type="Pfam" id="PF05201">
    <property type="entry name" value="GlutR_N"/>
    <property type="match status" value="1"/>
</dbReference>
<dbReference type="Pfam" id="PF01488">
    <property type="entry name" value="Shikimate_DH"/>
    <property type="match status" value="1"/>
</dbReference>
<dbReference type="PIRSF" id="PIRSF000445">
    <property type="entry name" value="4pyrrol_synth_GluRdtase"/>
    <property type="match status" value="1"/>
</dbReference>
<dbReference type="SUPFAM" id="SSF69742">
    <property type="entry name" value="Glutamyl tRNA-reductase catalytic, N-terminal domain"/>
    <property type="match status" value="1"/>
</dbReference>
<dbReference type="SUPFAM" id="SSF69075">
    <property type="entry name" value="Glutamyl tRNA-reductase dimerization domain"/>
    <property type="match status" value="1"/>
</dbReference>
<dbReference type="SUPFAM" id="SSF51735">
    <property type="entry name" value="NAD(P)-binding Rossmann-fold domains"/>
    <property type="match status" value="1"/>
</dbReference>
<dbReference type="PROSITE" id="PS00747">
    <property type="entry name" value="GLUTR"/>
    <property type="match status" value="1"/>
</dbReference>
<comment type="function">
    <text evidence="1">Catalyzes the NADPH-dependent reduction of glutamyl-tRNA(Glu) to glutamate 1-semialdehyde (GSA).</text>
</comment>
<comment type="catalytic activity">
    <reaction evidence="1">
        <text>(S)-4-amino-5-oxopentanoate + tRNA(Glu) + NADP(+) = L-glutamyl-tRNA(Glu) + NADPH + H(+)</text>
        <dbReference type="Rhea" id="RHEA:12344"/>
        <dbReference type="Rhea" id="RHEA-COMP:9663"/>
        <dbReference type="Rhea" id="RHEA-COMP:9680"/>
        <dbReference type="ChEBI" id="CHEBI:15378"/>
        <dbReference type="ChEBI" id="CHEBI:57501"/>
        <dbReference type="ChEBI" id="CHEBI:57783"/>
        <dbReference type="ChEBI" id="CHEBI:58349"/>
        <dbReference type="ChEBI" id="CHEBI:78442"/>
        <dbReference type="ChEBI" id="CHEBI:78520"/>
        <dbReference type="EC" id="1.2.1.70"/>
    </reaction>
</comment>
<comment type="pathway">
    <text evidence="1">Porphyrin-containing compound metabolism; protoporphyrin-IX biosynthesis; 5-aminolevulinate from L-glutamyl-tRNA(Glu): step 1/2.</text>
</comment>
<comment type="subunit">
    <text evidence="1">Homodimer.</text>
</comment>
<comment type="domain">
    <text evidence="1">Possesses an unusual extended V-shaped dimeric structure with each monomer consisting of three distinct domains arranged along a curved 'spinal' alpha-helix. The N-terminal catalytic domain specifically recognizes the glutamate moiety of the substrate. The second domain is the NADPH-binding domain, and the third C-terminal domain is responsible for dimerization.</text>
</comment>
<comment type="miscellaneous">
    <text evidence="1">During catalysis, the active site Cys acts as a nucleophile attacking the alpha-carbonyl group of tRNA-bound glutamate with the formation of a thioester intermediate between enzyme and glutamate, and the concomitant release of tRNA(Glu). The thioester intermediate is finally reduced by direct hydride transfer from NADPH, to form the product GSA.</text>
</comment>
<comment type="similarity">
    <text evidence="1">Belongs to the glutamyl-tRNA reductase family.</text>
</comment>